<accession>O21581</accession>
<name>NU3M_SCOTE</name>
<sequence length="115" mass="13119">MNLIMVISINIILSSILILVAFWLPQLNSYTEKANPYECGFDPMSSARLPFSMKFFLVAITFLLFDLEIALLLPIPWAIQTYNINTMLLAAFILVSILALGLAYEWKQKGLEWTE</sequence>
<protein>
    <recommendedName>
        <fullName evidence="1">NADH-ubiquinone oxidoreductase chain 3</fullName>
        <ecNumber evidence="1">7.1.1.2</ecNumber>
    </recommendedName>
    <alternativeName>
        <fullName>NADH dehydrogenase subunit 3</fullName>
    </alternativeName>
</protein>
<geneLocation type="mitochondrion"/>
<evidence type="ECO:0000250" key="1">
    <source>
        <dbReference type="UniProtKB" id="P03897"/>
    </source>
</evidence>
<evidence type="ECO:0000250" key="2">
    <source>
        <dbReference type="UniProtKB" id="P03898"/>
    </source>
</evidence>
<evidence type="ECO:0000255" key="3"/>
<evidence type="ECO:0000305" key="4"/>
<proteinExistence type="inferred from homology"/>
<comment type="function">
    <text evidence="1">Core subunit of the mitochondrial membrane respiratory chain NADH dehydrogenase (Complex I) which catalyzes electron transfer from NADH through the respiratory chain, using ubiquinone as an electron acceptor. Essential for the catalytic activity of complex I.</text>
</comment>
<comment type="catalytic activity">
    <reaction evidence="1">
        <text>a ubiquinone + NADH + 5 H(+)(in) = a ubiquinol + NAD(+) + 4 H(+)(out)</text>
        <dbReference type="Rhea" id="RHEA:29091"/>
        <dbReference type="Rhea" id="RHEA-COMP:9565"/>
        <dbReference type="Rhea" id="RHEA-COMP:9566"/>
        <dbReference type="ChEBI" id="CHEBI:15378"/>
        <dbReference type="ChEBI" id="CHEBI:16389"/>
        <dbReference type="ChEBI" id="CHEBI:17976"/>
        <dbReference type="ChEBI" id="CHEBI:57540"/>
        <dbReference type="ChEBI" id="CHEBI:57945"/>
        <dbReference type="EC" id="7.1.1.2"/>
    </reaction>
</comment>
<comment type="subunit">
    <text evidence="1">Core subunit of respiratory chain NADH dehydrogenase (Complex I) which is composed of 45 different subunits. Interacts with TMEM186. Interacts with TMEM242 (By similarity).</text>
</comment>
<comment type="subcellular location">
    <subcellularLocation>
        <location evidence="2">Mitochondrion inner membrane</location>
        <topology evidence="3">Multi-pass membrane protein</topology>
    </subcellularLocation>
</comment>
<comment type="similarity">
    <text evidence="4">Belongs to the complex I subunit 3 family.</text>
</comment>
<keyword id="KW-0249">Electron transport</keyword>
<keyword id="KW-0472">Membrane</keyword>
<keyword id="KW-0496">Mitochondrion</keyword>
<keyword id="KW-0999">Mitochondrion inner membrane</keyword>
<keyword id="KW-0520">NAD</keyword>
<keyword id="KW-0679">Respiratory chain</keyword>
<keyword id="KW-1278">Translocase</keyword>
<keyword id="KW-0812">Transmembrane</keyword>
<keyword id="KW-1133">Transmembrane helix</keyword>
<keyword id="KW-0813">Transport</keyword>
<keyword id="KW-0830">Ubiquinone</keyword>
<organism>
    <name type="scientific">Scotinomys teguina</name>
    <name type="common">Alston's brown mouse</name>
    <name type="synonym">Hesperomys teguina</name>
    <dbReference type="NCBI Taxonomy" id="56236"/>
    <lineage>
        <taxon>Eukaryota</taxon>
        <taxon>Metazoa</taxon>
        <taxon>Chordata</taxon>
        <taxon>Craniata</taxon>
        <taxon>Vertebrata</taxon>
        <taxon>Euteleostomi</taxon>
        <taxon>Mammalia</taxon>
        <taxon>Eutheria</taxon>
        <taxon>Euarchontoglires</taxon>
        <taxon>Glires</taxon>
        <taxon>Rodentia</taxon>
        <taxon>Myomorpha</taxon>
        <taxon>Muroidea</taxon>
        <taxon>Cricetidae</taxon>
        <taxon>Neotominae</taxon>
        <taxon>Scotinomys</taxon>
    </lineage>
</organism>
<gene>
    <name evidence="1" type="primary">MT-ND3</name>
    <name type="synonym">MTND3</name>
    <name type="synonym">NADH3</name>
    <name type="synonym">ND3</name>
</gene>
<reference key="1">
    <citation type="journal article" date="1998" name="Mol. Biol. Evol.">
        <title>Molecular systematics and paleobiogeography of the South American sigmodontine rodents.</title>
        <authorList>
            <person name="Engel S.R."/>
            <person name="Hogan K.M."/>
            <person name="Taylor J.F."/>
            <person name="Davis S.K."/>
        </authorList>
    </citation>
    <scope>NUCLEOTIDE SEQUENCE [GENOMIC DNA]</scope>
</reference>
<dbReference type="EC" id="7.1.1.2" evidence="1"/>
<dbReference type="EMBL" id="U83828">
    <property type="protein sequence ID" value="AAB87244.1"/>
    <property type="molecule type" value="Genomic_DNA"/>
</dbReference>
<dbReference type="SMR" id="O21581"/>
<dbReference type="GO" id="GO:0005743">
    <property type="term" value="C:mitochondrial inner membrane"/>
    <property type="evidence" value="ECO:0000250"/>
    <property type="project" value="UniProtKB"/>
</dbReference>
<dbReference type="GO" id="GO:0030964">
    <property type="term" value="C:NADH dehydrogenase complex"/>
    <property type="evidence" value="ECO:0007669"/>
    <property type="project" value="TreeGrafter"/>
</dbReference>
<dbReference type="GO" id="GO:0008137">
    <property type="term" value="F:NADH dehydrogenase (ubiquinone) activity"/>
    <property type="evidence" value="ECO:0000250"/>
    <property type="project" value="UniProtKB"/>
</dbReference>
<dbReference type="GO" id="GO:0006120">
    <property type="term" value="P:mitochondrial electron transport, NADH to ubiquinone"/>
    <property type="evidence" value="ECO:0000250"/>
    <property type="project" value="UniProtKB"/>
</dbReference>
<dbReference type="FunFam" id="1.20.58.1610:FF:000004">
    <property type="entry name" value="NADH-quinone oxidoreductase subunit A"/>
    <property type="match status" value="1"/>
</dbReference>
<dbReference type="Gene3D" id="1.20.58.1610">
    <property type="entry name" value="NADH:ubiquinone/plastoquinone oxidoreductase, chain 3"/>
    <property type="match status" value="1"/>
</dbReference>
<dbReference type="InterPro" id="IPR000440">
    <property type="entry name" value="NADH_UbQ/plastoQ_OxRdtase_su3"/>
</dbReference>
<dbReference type="InterPro" id="IPR038430">
    <property type="entry name" value="NDAH_ubi_oxred_su3_sf"/>
</dbReference>
<dbReference type="PANTHER" id="PTHR11058">
    <property type="entry name" value="NADH-UBIQUINONE OXIDOREDUCTASE CHAIN 3"/>
    <property type="match status" value="1"/>
</dbReference>
<dbReference type="PANTHER" id="PTHR11058:SF9">
    <property type="entry name" value="NADH-UBIQUINONE OXIDOREDUCTASE CHAIN 3"/>
    <property type="match status" value="1"/>
</dbReference>
<dbReference type="Pfam" id="PF00507">
    <property type="entry name" value="Oxidored_q4"/>
    <property type="match status" value="1"/>
</dbReference>
<feature type="chain" id="PRO_0000117829" description="NADH-ubiquinone oxidoreductase chain 3">
    <location>
        <begin position="1"/>
        <end position="115"/>
    </location>
</feature>
<feature type="transmembrane region" description="Helical" evidence="3">
    <location>
        <begin position="3"/>
        <end position="23"/>
    </location>
</feature>
<feature type="transmembrane region" description="Helical" evidence="3">
    <location>
        <begin position="55"/>
        <end position="75"/>
    </location>
</feature>
<feature type="transmembrane region" description="Helical" evidence="3">
    <location>
        <begin position="84"/>
        <end position="104"/>
    </location>
</feature>